<organism>
    <name type="scientific">Deinococcus radiodurans (strain ATCC 13939 / DSM 20539 / JCM 16871 / CCUG 27074 / LMG 4051 / NBRC 15346 / NCIMB 9279 / VKM B-1422 / R1)</name>
    <dbReference type="NCBI Taxonomy" id="243230"/>
    <lineage>
        <taxon>Bacteria</taxon>
        <taxon>Thermotogati</taxon>
        <taxon>Deinococcota</taxon>
        <taxon>Deinococci</taxon>
        <taxon>Deinococcales</taxon>
        <taxon>Deinococcaceae</taxon>
        <taxon>Deinococcus</taxon>
    </lineage>
</organism>
<comment type="function">
    <text evidence="1">Catalyzes the hydrolytic deamination of guanine, producing xanthine and ammonia.</text>
</comment>
<comment type="catalytic activity">
    <reaction>
        <text>guanine + H2O + H(+) = xanthine + NH4(+)</text>
        <dbReference type="Rhea" id="RHEA:14665"/>
        <dbReference type="ChEBI" id="CHEBI:15377"/>
        <dbReference type="ChEBI" id="CHEBI:15378"/>
        <dbReference type="ChEBI" id="CHEBI:16235"/>
        <dbReference type="ChEBI" id="CHEBI:17712"/>
        <dbReference type="ChEBI" id="CHEBI:28938"/>
        <dbReference type="EC" id="3.5.4.3"/>
    </reaction>
</comment>
<comment type="cofactor">
    <cofactor evidence="1">
        <name>Zn(2+)</name>
        <dbReference type="ChEBI" id="CHEBI:29105"/>
    </cofactor>
    <text evidence="1">Binds 1 zinc ion per subunit.</text>
</comment>
<comment type="pathway">
    <text>Purine metabolism; guanine degradation; xanthine from guanine: step 1/1.</text>
</comment>
<comment type="similarity">
    <text evidence="3">Belongs to the metallo-dependent hydrolases superfamily. ATZ/TRZ family.</text>
</comment>
<accession>Q9RYX4</accession>
<name>GUAD_DEIRA</name>
<sequence length="439" mass="46688">MKIYRSTLLHTPASPFAVPDALQTFSDGALAVGDTGTIAHLGTFTEVLAEVRAACPDAEVHDLRGGVLLPGFIDTHVHYPQVRVLGGLGMALLEWLDRNTLPEEARLADAAYARTIAGEFLHGLASHGTTTALVFGSHFAGAMDEFFAEAAARGLRVVAGQVVSDRLLRPELHTTPERAYAEGKALIERWHGQGRSLYAVTPRFSLSASEGILDACAALLTEFPDVRFTSHINENNQEIEVVRGLFPGARDYLDTYERAGLVTPRSVFAHNVHPNERELGVLAAQRCSVAHCPCSNSALGSGLFPLRRHLAAGVHVALGTDVGGGTGFSLLKEGLQAYFMQQLLGEEGAALSPAHLLYLATLAGAQALGLDGQVGDFTPGKQFDAVWLRPRAGSTLATVLAHAESEERTLAALFALGTGDDVERVWVGGGVVFAREAEA</sequence>
<reference key="1">
    <citation type="journal article" date="1999" name="Science">
        <title>Genome sequence of the radioresistant bacterium Deinococcus radiodurans R1.</title>
        <authorList>
            <person name="White O."/>
            <person name="Eisen J.A."/>
            <person name="Heidelberg J.F."/>
            <person name="Hickey E.K."/>
            <person name="Peterson J.D."/>
            <person name="Dodson R.J."/>
            <person name="Haft D.H."/>
            <person name="Gwinn M.L."/>
            <person name="Nelson W.C."/>
            <person name="Richardson D.L."/>
            <person name="Moffat K.S."/>
            <person name="Qin H."/>
            <person name="Jiang L."/>
            <person name="Pamphile W."/>
            <person name="Crosby M."/>
            <person name="Shen M."/>
            <person name="Vamathevan J.J."/>
            <person name="Lam P."/>
            <person name="McDonald L.A."/>
            <person name="Utterback T.R."/>
            <person name="Zalewski C."/>
            <person name="Makarova K.S."/>
            <person name="Aravind L."/>
            <person name="Daly M.J."/>
            <person name="Minton K.W."/>
            <person name="Fleischmann R.D."/>
            <person name="Ketchum K.A."/>
            <person name="Nelson K.E."/>
            <person name="Salzberg S.L."/>
            <person name="Smith H.O."/>
            <person name="Venter J.C."/>
            <person name="Fraser C.M."/>
        </authorList>
    </citation>
    <scope>NUCLEOTIDE SEQUENCE [LARGE SCALE GENOMIC DNA]</scope>
    <source>
        <strain>ATCC 13939 / DSM 20539 / JCM 16871 / CCUG 27074 / LMG 4051 / NBRC 15346 / NCIMB 9279 / VKM B-1422 / R1</strain>
    </source>
</reference>
<keyword id="KW-0378">Hydrolase</keyword>
<keyword id="KW-0479">Metal-binding</keyword>
<keyword id="KW-1185">Reference proteome</keyword>
<keyword id="KW-0862">Zinc</keyword>
<proteinExistence type="inferred from homology"/>
<evidence type="ECO:0000250" key="1"/>
<evidence type="ECO:0000250" key="2">
    <source>
        <dbReference type="UniProtKB" id="Q9Y2T3"/>
    </source>
</evidence>
<evidence type="ECO:0000305" key="3"/>
<protein>
    <recommendedName>
        <fullName>Probable guanine deaminase</fullName>
        <shortName>Guanase</shortName>
        <shortName>Guanine aminase</shortName>
        <ecNumber>3.5.4.3</ecNumber>
    </recommendedName>
    <alternativeName>
        <fullName>Guanine aminohydrolase</fullName>
        <shortName>GAH</shortName>
    </alternativeName>
</protein>
<dbReference type="EC" id="3.5.4.3"/>
<dbReference type="EMBL" id="AE001825">
    <property type="protein sequence ID" value="AAF12192.1"/>
    <property type="molecule type" value="Genomic_DNA"/>
</dbReference>
<dbReference type="PIR" id="F75614">
    <property type="entry name" value="F75614"/>
</dbReference>
<dbReference type="RefSeq" id="NP_285504.1">
    <property type="nucleotide sequence ID" value="NC_001264.1"/>
</dbReference>
<dbReference type="RefSeq" id="WP_010889440.1">
    <property type="nucleotide sequence ID" value="NC_001264.1"/>
</dbReference>
<dbReference type="SMR" id="Q9RYX4"/>
<dbReference type="STRING" id="243230.DR_A0180"/>
<dbReference type="PaxDb" id="243230-DR_A0180"/>
<dbReference type="EnsemblBacteria" id="AAF12192">
    <property type="protein sequence ID" value="AAF12192"/>
    <property type="gene ID" value="DR_A0180"/>
</dbReference>
<dbReference type="GeneID" id="69519075"/>
<dbReference type="KEGG" id="dra:DR_A0180"/>
<dbReference type="PATRIC" id="fig|243230.17.peg.3069"/>
<dbReference type="eggNOG" id="COG0402">
    <property type="taxonomic scope" value="Bacteria"/>
</dbReference>
<dbReference type="HOGENOM" id="CLU_012358_0_2_0"/>
<dbReference type="InParanoid" id="Q9RYX4"/>
<dbReference type="OrthoDB" id="9807210at2"/>
<dbReference type="UniPathway" id="UPA00603">
    <property type="reaction ID" value="UER00660"/>
</dbReference>
<dbReference type="Proteomes" id="UP000002524">
    <property type="component" value="Chromosome 2"/>
</dbReference>
<dbReference type="GO" id="GO:0005829">
    <property type="term" value="C:cytosol"/>
    <property type="evidence" value="ECO:0000318"/>
    <property type="project" value="GO_Central"/>
</dbReference>
<dbReference type="GO" id="GO:0008892">
    <property type="term" value="F:guanine deaminase activity"/>
    <property type="evidence" value="ECO:0000318"/>
    <property type="project" value="GO_Central"/>
</dbReference>
<dbReference type="GO" id="GO:0008270">
    <property type="term" value="F:zinc ion binding"/>
    <property type="evidence" value="ECO:0000318"/>
    <property type="project" value="GO_Central"/>
</dbReference>
<dbReference type="GO" id="GO:0006147">
    <property type="term" value="P:guanine catabolic process"/>
    <property type="evidence" value="ECO:0007669"/>
    <property type="project" value="UniProtKB-UniPathway"/>
</dbReference>
<dbReference type="GO" id="GO:0046098">
    <property type="term" value="P:guanine metabolic process"/>
    <property type="evidence" value="ECO:0000318"/>
    <property type="project" value="GO_Central"/>
</dbReference>
<dbReference type="Gene3D" id="3.20.20.140">
    <property type="entry name" value="Metal-dependent hydrolases"/>
    <property type="match status" value="1"/>
</dbReference>
<dbReference type="Gene3D" id="2.30.40.10">
    <property type="entry name" value="Urease, subunit C, domain 1"/>
    <property type="match status" value="1"/>
</dbReference>
<dbReference type="InterPro" id="IPR006680">
    <property type="entry name" value="Amidohydro-rel"/>
</dbReference>
<dbReference type="InterPro" id="IPR014311">
    <property type="entry name" value="Guanine_deaminase"/>
</dbReference>
<dbReference type="InterPro" id="IPR011059">
    <property type="entry name" value="Metal-dep_hydrolase_composite"/>
</dbReference>
<dbReference type="InterPro" id="IPR032466">
    <property type="entry name" value="Metal_Hydrolase"/>
</dbReference>
<dbReference type="InterPro" id="IPR051607">
    <property type="entry name" value="Metallo-dep_hydrolases"/>
</dbReference>
<dbReference type="NCBIfam" id="TIGR02967">
    <property type="entry name" value="guan_deamin"/>
    <property type="match status" value="1"/>
</dbReference>
<dbReference type="NCBIfam" id="NF006679">
    <property type="entry name" value="PRK09228.1"/>
    <property type="match status" value="1"/>
</dbReference>
<dbReference type="PANTHER" id="PTHR11271">
    <property type="entry name" value="GUANINE DEAMINASE"/>
    <property type="match status" value="1"/>
</dbReference>
<dbReference type="PANTHER" id="PTHR11271:SF6">
    <property type="entry name" value="GUANINE DEAMINASE"/>
    <property type="match status" value="1"/>
</dbReference>
<dbReference type="Pfam" id="PF01979">
    <property type="entry name" value="Amidohydro_1"/>
    <property type="match status" value="1"/>
</dbReference>
<dbReference type="SUPFAM" id="SSF51338">
    <property type="entry name" value="Composite domain of metallo-dependent hydrolases"/>
    <property type="match status" value="1"/>
</dbReference>
<dbReference type="SUPFAM" id="SSF51556">
    <property type="entry name" value="Metallo-dependent hydrolases"/>
    <property type="match status" value="1"/>
</dbReference>
<gene>
    <name type="primary">guaD</name>
    <name type="ordered locus">DR_A0180</name>
</gene>
<feature type="chain" id="PRO_0000122296" description="Probable guanine deaminase">
    <location>
        <begin position="1"/>
        <end position="439"/>
    </location>
</feature>
<feature type="binding site" evidence="2">
    <location>
        <position position="76"/>
    </location>
    <ligand>
        <name>Zn(2+)</name>
        <dbReference type="ChEBI" id="CHEBI:29105"/>
    </ligand>
</feature>
<feature type="binding site" evidence="2">
    <location>
        <begin position="78"/>
        <end position="81"/>
    </location>
    <ligand>
        <name>substrate</name>
    </ligand>
</feature>
<feature type="binding site" evidence="2">
    <location>
        <position position="78"/>
    </location>
    <ligand>
        <name>Zn(2+)</name>
        <dbReference type="ChEBI" id="CHEBI:29105"/>
    </ligand>
</feature>
<feature type="binding site" evidence="2">
    <location>
        <begin position="203"/>
        <end position="204"/>
    </location>
    <ligand>
        <name>substrate</name>
    </ligand>
</feature>
<feature type="binding site" evidence="2">
    <location>
        <begin position="231"/>
        <end position="234"/>
    </location>
    <ligand>
        <name>substrate</name>
    </ligand>
</feature>
<feature type="binding site" evidence="2">
    <location>
        <position position="231"/>
    </location>
    <ligand>
        <name>Zn(2+)</name>
        <dbReference type="ChEBI" id="CHEBI:29105"/>
    </ligand>
</feature>
<feature type="binding site" evidence="2">
    <location>
        <position position="321"/>
    </location>
    <ligand>
        <name>substrate</name>
    </ligand>
</feature>
<feature type="binding site" evidence="2">
    <location>
        <position position="321"/>
    </location>
    <ligand>
        <name>Zn(2+)</name>
        <dbReference type="ChEBI" id="CHEBI:29105"/>
    </ligand>
</feature>